<proteinExistence type="evidence at protein level"/>
<reference key="1">
    <citation type="journal article" date="2000" name="Nature">
        <title>Sequence and analysis of chromosome 3 of the plant Arabidopsis thaliana.</title>
        <authorList>
            <person name="Salanoubat M."/>
            <person name="Lemcke K."/>
            <person name="Rieger M."/>
            <person name="Ansorge W."/>
            <person name="Unseld M."/>
            <person name="Fartmann B."/>
            <person name="Valle G."/>
            <person name="Bloecker H."/>
            <person name="Perez-Alonso M."/>
            <person name="Obermaier B."/>
            <person name="Delseny M."/>
            <person name="Boutry M."/>
            <person name="Grivell L.A."/>
            <person name="Mache R."/>
            <person name="Puigdomenech P."/>
            <person name="De Simone V."/>
            <person name="Choisne N."/>
            <person name="Artiguenave F."/>
            <person name="Robert C."/>
            <person name="Brottier P."/>
            <person name="Wincker P."/>
            <person name="Cattolico L."/>
            <person name="Weissenbach J."/>
            <person name="Saurin W."/>
            <person name="Quetier F."/>
            <person name="Schaefer M."/>
            <person name="Mueller-Auer S."/>
            <person name="Gabel C."/>
            <person name="Fuchs M."/>
            <person name="Benes V."/>
            <person name="Wurmbach E."/>
            <person name="Drzonek H."/>
            <person name="Erfle H."/>
            <person name="Jordan N."/>
            <person name="Bangert S."/>
            <person name="Wiedelmann R."/>
            <person name="Kranz H."/>
            <person name="Voss H."/>
            <person name="Holland R."/>
            <person name="Brandt P."/>
            <person name="Nyakatura G."/>
            <person name="Vezzi A."/>
            <person name="D'Angelo M."/>
            <person name="Pallavicini A."/>
            <person name="Toppo S."/>
            <person name="Simionati B."/>
            <person name="Conrad A."/>
            <person name="Hornischer K."/>
            <person name="Kauer G."/>
            <person name="Loehnert T.-H."/>
            <person name="Nordsiek G."/>
            <person name="Reichelt J."/>
            <person name="Scharfe M."/>
            <person name="Schoen O."/>
            <person name="Bargues M."/>
            <person name="Terol J."/>
            <person name="Climent J."/>
            <person name="Navarro P."/>
            <person name="Collado C."/>
            <person name="Perez-Perez A."/>
            <person name="Ottenwaelder B."/>
            <person name="Duchemin D."/>
            <person name="Cooke R."/>
            <person name="Laudie M."/>
            <person name="Berger-Llauro C."/>
            <person name="Purnelle B."/>
            <person name="Masuy D."/>
            <person name="de Haan M."/>
            <person name="Maarse A.C."/>
            <person name="Alcaraz J.-P."/>
            <person name="Cottet A."/>
            <person name="Casacuberta E."/>
            <person name="Monfort A."/>
            <person name="Argiriou A."/>
            <person name="Flores M."/>
            <person name="Liguori R."/>
            <person name="Vitale D."/>
            <person name="Mannhaupt G."/>
            <person name="Haase D."/>
            <person name="Schoof H."/>
            <person name="Rudd S."/>
            <person name="Zaccaria P."/>
            <person name="Mewes H.-W."/>
            <person name="Mayer K.F.X."/>
            <person name="Kaul S."/>
            <person name="Town C.D."/>
            <person name="Koo H.L."/>
            <person name="Tallon L.J."/>
            <person name="Jenkins J."/>
            <person name="Rooney T."/>
            <person name="Rizzo M."/>
            <person name="Walts A."/>
            <person name="Utterback T."/>
            <person name="Fujii C.Y."/>
            <person name="Shea T.P."/>
            <person name="Creasy T.H."/>
            <person name="Haas B."/>
            <person name="Maiti R."/>
            <person name="Wu D."/>
            <person name="Peterson J."/>
            <person name="Van Aken S."/>
            <person name="Pai G."/>
            <person name="Militscher J."/>
            <person name="Sellers P."/>
            <person name="Gill J.E."/>
            <person name="Feldblyum T.V."/>
            <person name="Preuss D."/>
            <person name="Lin X."/>
            <person name="Nierman W.C."/>
            <person name="Salzberg S.L."/>
            <person name="White O."/>
            <person name="Venter J.C."/>
            <person name="Fraser C.M."/>
            <person name="Kaneko T."/>
            <person name="Nakamura Y."/>
            <person name="Sato S."/>
            <person name="Kato T."/>
            <person name="Asamizu E."/>
            <person name="Sasamoto S."/>
            <person name="Kimura T."/>
            <person name="Idesawa K."/>
            <person name="Kawashima K."/>
            <person name="Kishida Y."/>
            <person name="Kiyokawa C."/>
            <person name="Kohara M."/>
            <person name="Matsumoto M."/>
            <person name="Matsuno A."/>
            <person name="Muraki A."/>
            <person name="Nakayama S."/>
            <person name="Nakazaki N."/>
            <person name="Shinpo S."/>
            <person name="Takeuchi C."/>
            <person name="Wada T."/>
            <person name="Watanabe A."/>
            <person name="Yamada M."/>
            <person name="Yasuda M."/>
            <person name="Tabata S."/>
        </authorList>
    </citation>
    <scope>NUCLEOTIDE SEQUENCE [LARGE SCALE GENOMIC DNA]</scope>
    <source>
        <strain>cv. Columbia</strain>
    </source>
</reference>
<reference key="2">
    <citation type="journal article" date="2017" name="Plant J.">
        <title>Araport11: a complete reannotation of the Arabidopsis thaliana reference genome.</title>
        <authorList>
            <person name="Cheng C.Y."/>
            <person name="Krishnakumar V."/>
            <person name="Chan A.P."/>
            <person name="Thibaud-Nissen F."/>
            <person name="Schobel S."/>
            <person name="Town C.D."/>
        </authorList>
    </citation>
    <scope>GENOME REANNOTATION</scope>
    <source>
        <strain>cv. Columbia</strain>
    </source>
</reference>
<reference key="3">
    <citation type="journal article" date="2002" name="Science">
        <title>Functional annotation of a full-length Arabidopsis cDNA collection.</title>
        <authorList>
            <person name="Seki M."/>
            <person name="Narusaka M."/>
            <person name="Kamiya A."/>
            <person name="Ishida J."/>
            <person name="Satou M."/>
            <person name="Sakurai T."/>
            <person name="Nakajima M."/>
            <person name="Enju A."/>
            <person name="Akiyama K."/>
            <person name="Oono Y."/>
            <person name="Muramatsu M."/>
            <person name="Hayashizaki Y."/>
            <person name="Kawai J."/>
            <person name="Carninci P."/>
            <person name="Itoh M."/>
            <person name="Ishii Y."/>
            <person name="Arakawa T."/>
            <person name="Shibata K."/>
            <person name="Shinagawa A."/>
            <person name="Shinozaki K."/>
        </authorList>
    </citation>
    <scope>NUCLEOTIDE SEQUENCE [LARGE SCALE MRNA] (ISOFORM 1)</scope>
    <source>
        <strain>cv. Columbia</strain>
    </source>
</reference>
<reference key="4">
    <citation type="submission" date="2006-02" db="EMBL/GenBank/DDBJ databases">
        <title>Arabidopsis ORF clones.</title>
        <authorList>
            <person name="Shinn P."/>
            <person name="Chen H."/>
            <person name="Kim C.J."/>
            <person name="Ecker J.R."/>
        </authorList>
    </citation>
    <scope>NUCLEOTIDE SEQUENCE [LARGE SCALE MRNA] (ISOFORM 2)</scope>
</reference>
<reference key="5">
    <citation type="journal article" date="2009" name="DNA Res.">
        <title>Analysis of multiple occurrences of alternative splicing events in Arabidopsis thaliana using novel sequenced full-length cDNAs.</title>
        <authorList>
            <person name="Iida K."/>
            <person name="Fukami-Kobayashi K."/>
            <person name="Toyoda A."/>
            <person name="Sakaki Y."/>
            <person name="Kobayashi M."/>
            <person name="Seki M."/>
            <person name="Shinozaki K."/>
        </authorList>
    </citation>
    <scope>NUCLEOTIDE SEQUENCE [LARGE SCALE MRNA] (ISOFORM 1)</scope>
    <source>
        <strain>cv. Columbia</strain>
        <tissue>Rosette leaf</tissue>
    </source>
</reference>
<reference key="6">
    <citation type="submission" date="2002-03" db="EMBL/GenBank/DDBJ databases">
        <title>Full-length cDNA from Arabidopsis thaliana.</title>
        <authorList>
            <person name="Brover V.V."/>
            <person name="Troukhan M.E."/>
            <person name="Alexandrov N.A."/>
            <person name="Lu Y.-P."/>
            <person name="Flavell R.B."/>
            <person name="Feldmann K.A."/>
        </authorList>
    </citation>
    <scope>NUCLEOTIDE SEQUENCE [LARGE SCALE MRNA] (ISOFORM 2)</scope>
</reference>
<reference key="7">
    <citation type="journal article" date="2003" name="Plant Physiol.">
        <title>WVD2 and WDL1 modulate helical organ growth and anisotropic cell expansion in Arabidopsis.</title>
        <authorList>
            <person name="Yuen C.Y."/>
            <person name="Pearlman R.S."/>
            <person name="Silo-Suh L."/>
            <person name="Hilson P."/>
            <person name="Carroll K.L."/>
            <person name="Masson P.H."/>
        </authorList>
    </citation>
    <scope>IDENTIFICATION</scope>
    <scope>FUNCTION</scope>
</reference>
<reference key="8">
    <citation type="journal article" date="2007" name="Plant J.">
        <title>WVD2 is a novel microtubule-associated protein in Arabidopsis thaliana.</title>
        <authorList>
            <person name="Perrin R.M."/>
            <person name="Wang Y."/>
            <person name="Yuen C.Y."/>
            <person name="Will J."/>
            <person name="Masson P.H."/>
        </authorList>
    </citation>
    <scope>FUNCTION</scope>
    <scope>SUBCELLULAR LOCATION</scope>
</reference>
<reference key="9">
    <citation type="journal article" date="2009" name="Plant Physiol.">
        <title>Large-scale Arabidopsis phosphoproteome profiling reveals novel chloroplast kinase substrates and phosphorylation networks.</title>
        <authorList>
            <person name="Reiland S."/>
            <person name="Messerli G."/>
            <person name="Baerenfaller K."/>
            <person name="Gerrits B."/>
            <person name="Endler A."/>
            <person name="Grossmann J."/>
            <person name="Gruissem W."/>
            <person name="Baginsky S."/>
        </authorList>
    </citation>
    <scope>PHOSPHORYLATION [LARGE SCALE ANALYSIS] AT THR-32</scope>
    <scope>IDENTIFICATION BY MASS SPECTROMETRY [LARGE SCALE ANALYSIS]</scope>
</reference>
<accession>Q8GYX9</accession>
<accession>B9DGL4</accession>
<accession>Q2HIS4</accession>
<accession>Q8LAB8</accession>
<accession>Q9SR11</accession>
<name>WDL1_ARATH</name>
<comment type="function">
    <text evidence="3 4">Microtubule-associated protein (MAP) that regulates the orientation of interphase cortical microtubules. Modulates both rotational polarity and anisotropic cell expansion during organ growth. Promotes clockwise root and etiolated hypocotyls coiling, clockwise leaf curling, but left-handed petiole twisting.</text>
</comment>
<comment type="subcellular location">
    <subcellularLocation>
        <location evidence="4">Cytoplasm</location>
        <location evidence="4">Cytoskeleton</location>
    </subcellularLocation>
</comment>
<comment type="alternative products">
    <event type="alternative splicing"/>
    <isoform>
        <id>Q8GYX9-1</id>
        <name>1</name>
        <sequence type="displayed"/>
    </isoform>
    <isoform>
        <id>Q8GYX9-2</id>
        <name>2</name>
        <sequence type="described" ref="VSP_044608"/>
    </isoform>
</comment>
<comment type="similarity">
    <text evidence="7">Belongs to the TPX2 family.</text>
</comment>
<comment type="sequence caution" evidence="7">
    <conflict type="erroneous initiation">
        <sequence resource="EMBL-CDS" id="AAF04893"/>
    </conflict>
    <text>Extended N-terminus.</text>
</comment>
<protein>
    <recommendedName>
        <fullName>Protein WVD2-like 1</fullName>
        <shortName>AtWDL1</shortName>
    </recommendedName>
</protein>
<feature type="chain" id="PRO_0000420702" description="Protein WVD2-like 1">
    <location>
        <begin position="1"/>
        <end position="286"/>
    </location>
</feature>
<feature type="region of interest" description="Disordered" evidence="2">
    <location>
        <begin position="31"/>
        <end position="101"/>
    </location>
</feature>
<feature type="region of interest" description="Disordered" evidence="2">
    <location>
        <begin position="186"/>
        <end position="286"/>
    </location>
</feature>
<feature type="coiled-coil region" evidence="1">
    <location>
        <begin position="131"/>
        <end position="182"/>
    </location>
</feature>
<feature type="compositionally biased region" description="Basic and acidic residues" evidence="2">
    <location>
        <begin position="38"/>
        <end position="47"/>
    </location>
</feature>
<feature type="compositionally biased region" description="Polar residues" evidence="2">
    <location>
        <begin position="234"/>
        <end position="247"/>
    </location>
</feature>
<feature type="modified residue" description="Phosphothreonine" evidence="8">
    <location>
        <position position="32"/>
    </location>
</feature>
<feature type="splice variant" id="VSP_044608" description="In isoform 2." evidence="5 6">
    <original>Q</original>
    <variation>QQ</variation>
    <location>
        <position position="78"/>
    </location>
</feature>
<feature type="sequence conflict" description="In Ref. 5; BAH19881." evidence="7" ref="5">
    <original>V</original>
    <variation>A</variation>
    <location>
        <position position="235"/>
    </location>
</feature>
<feature type="sequence conflict" description="In Ref. 6; AAM67336." evidence="7" ref="6">
    <original>R</original>
    <variation>K</variation>
    <location>
        <position position="254"/>
    </location>
</feature>
<organism>
    <name type="scientific">Arabidopsis thaliana</name>
    <name type="common">Mouse-ear cress</name>
    <dbReference type="NCBI Taxonomy" id="3702"/>
    <lineage>
        <taxon>Eukaryota</taxon>
        <taxon>Viridiplantae</taxon>
        <taxon>Streptophyta</taxon>
        <taxon>Embryophyta</taxon>
        <taxon>Tracheophyta</taxon>
        <taxon>Spermatophyta</taxon>
        <taxon>Magnoliopsida</taxon>
        <taxon>eudicotyledons</taxon>
        <taxon>Gunneridae</taxon>
        <taxon>Pentapetalae</taxon>
        <taxon>rosids</taxon>
        <taxon>malvids</taxon>
        <taxon>Brassicales</taxon>
        <taxon>Brassicaceae</taxon>
        <taxon>Camelineae</taxon>
        <taxon>Arabidopsis</taxon>
    </lineage>
</organism>
<keyword id="KW-0025">Alternative splicing</keyword>
<keyword id="KW-0175">Coiled coil</keyword>
<keyword id="KW-0963">Cytoplasm</keyword>
<keyword id="KW-0206">Cytoskeleton</keyword>
<keyword id="KW-0493">Microtubule</keyword>
<keyword id="KW-0597">Phosphoprotein</keyword>
<keyword id="KW-1185">Reference proteome</keyword>
<dbReference type="EMBL" id="AC011437">
    <property type="protein sequence ID" value="AAF04893.1"/>
    <property type="status" value="ALT_INIT"/>
    <property type="molecule type" value="Genomic_DNA"/>
</dbReference>
<dbReference type="EMBL" id="CP002686">
    <property type="protein sequence ID" value="AEE74108.1"/>
    <property type="molecule type" value="Genomic_DNA"/>
</dbReference>
<dbReference type="EMBL" id="CP002686">
    <property type="protein sequence ID" value="AEE74109.1"/>
    <property type="molecule type" value="Genomic_DNA"/>
</dbReference>
<dbReference type="EMBL" id="AK117325">
    <property type="protein sequence ID" value="BAC41996.1"/>
    <property type="molecule type" value="mRNA"/>
</dbReference>
<dbReference type="EMBL" id="BT024507">
    <property type="protein sequence ID" value="ABD19688.1"/>
    <property type="molecule type" value="mRNA"/>
</dbReference>
<dbReference type="EMBL" id="AK317197">
    <property type="protein sequence ID" value="BAH19881.1"/>
    <property type="molecule type" value="mRNA"/>
</dbReference>
<dbReference type="EMBL" id="AY087930">
    <property type="protein sequence ID" value="AAM67336.1"/>
    <property type="molecule type" value="mRNA"/>
</dbReference>
<dbReference type="RefSeq" id="NP_001319470.1">
    <property type="nucleotide sequence ID" value="NM_001337538.1"/>
</dbReference>
<dbReference type="RefSeq" id="NP_566233.1">
    <molecule id="Q8GYX9-2"/>
    <property type="nucleotide sequence ID" value="NM_111335.2"/>
</dbReference>
<dbReference type="RefSeq" id="NP_850514.1">
    <molecule id="Q8GYX9-1"/>
    <property type="nucleotide sequence ID" value="NM_180183.3"/>
</dbReference>
<dbReference type="SMR" id="Q8GYX9"/>
<dbReference type="STRING" id="3702.Q8GYX9"/>
<dbReference type="iPTMnet" id="Q8GYX9"/>
<dbReference type="PaxDb" id="3702-AT3G04630.1"/>
<dbReference type="ProteomicsDB" id="242673">
    <molecule id="Q8GYX9-1"/>
</dbReference>
<dbReference type="DNASU" id="819621"/>
<dbReference type="EnsemblPlants" id="AT3G04630.1">
    <molecule id="Q8GYX9-2"/>
    <property type="protein sequence ID" value="AT3G04630.1"/>
    <property type="gene ID" value="AT3G04630"/>
</dbReference>
<dbReference type="EnsemblPlants" id="AT3G04630.2">
    <molecule id="Q8GYX9-1"/>
    <property type="protein sequence ID" value="AT3G04630.2"/>
    <property type="gene ID" value="AT3G04630"/>
</dbReference>
<dbReference type="GeneID" id="819621"/>
<dbReference type="Gramene" id="AT3G04630.1">
    <molecule id="Q8GYX9-2"/>
    <property type="protein sequence ID" value="AT3G04630.1"/>
    <property type="gene ID" value="AT3G04630"/>
</dbReference>
<dbReference type="Gramene" id="AT3G04630.2">
    <molecule id="Q8GYX9-1"/>
    <property type="protein sequence ID" value="AT3G04630.2"/>
    <property type="gene ID" value="AT3G04630"/>
</dbReference>
<dbReference type="KEGG" id="ath:AT3G04630"/>
<dbReference type="Araport" id="AT3G04630"/>
<dbReference type="TAIR" id="AT3G04630">
    <property type="gene designation" value="WDL1"/>
</dbReference>
<dbReference type="eggNOG" id="ENOG502RERJ">
    <property type="taxonomic scope" value="Eukaryota"/>
</dbReference>
<dbReference type="HOGENOM" id="CLU_1157835_0_0_1"/>
<dbReference type="InParanoid" id="Q8GYX9"/>
<dbReference type="PhylomeDB" id="Q8GYX9"/>
<dbReference type="PRO" id="PR:Q8GYX9"/>
<dbReference type="Proteomes" id="UP000006548">
    <property type="component" value="Chromosome 3"/>
</dbReference>
<dbReference type="ExpressionAtlas" id="Q8GYX9">
    <property type="expression patterns" value="baseline and differential"/>
</dbReference>
<dbReference type="GO" id="GO:0005737">
    <property type="term" value="C:cytoplasm"/>
    <property type="evidence" value="ECO:0000250"/>
    <property type="project" value="TAIR"/>
</dbReference>
<dbReference type="GO" id="GO:0005874">
    <property type="term" value="C:microtubule"/>
    <property type="evidence" value="ECO:0007669"/>
    <property type="project" value="UniProtKB-KW"/>
</dbReference>
<dbReference type="GO" id="GO:0008017">
    <property type="term" value="F:microtubule binding"/>
    <property type="evidence" value="ECO:0007669"/>
    <property type="project" value="InterPro"/>
</dbReference>
<dbReference type="GO" id="GO:0010031">
    <property type="term" value="P:circumnutation"/>
    <property type="evidence" value="ECO:0000315"/>
    <property type="project" value="TAIR"/>
</dbReference>
<dbReference type="GO" id="GO:0000226">
    <property type="term" value="P:microtubule cytoskeleton organization"/>
    <property type="evidence" value="ECO:0007669"/>
    <property type="project" value="InterPro"/>
</dbReference>
<dbReference type="GO" id="GO:0010015">
    <property type="term" value="P:root morphogenesis"/>
    <property type="evidence" value="ECO:0000315"/>
    <property type="project" value="TAIR"/>
</dbReference>
<dbReference type="InterPro" id="IPR027329">
    <property type="entry name" value="TPX2_C"/>
</dbReference>
<dbReference type="InterPro" id="IPR044806">
    <property type="entry name" value="WVD2/WDL1-4"/>
</dbReference>
<dbReference type="PANTHER" id="PTHR46372:SF6">
    <property type="entry name" value="PROTEIN WVD2-LIKE 1"/>
    <property type="match status" value="1"/>
</dbReference>
<dbReference type="PANTHER" id="PTHR46372">
    <property type="entry name" value="PROTEIN WVD2-LIKE 3"/>
    <property type="match status" value="1"/>
</dbReference>
<dbReference type="Pfam" id="PF06886">
    <property type="entry name" value="TPX2"/>
    <property type="match status" value="1"/>
</dbReference>
<evidence type="ECO:0000255" key="1"/>
<evidence type="ECO:0000256" key="2">
    <source>
        <dbReference type="SAM" id="MobiDB-lite"/>
    </source>
</evidence>
<evidence type="ECO:0000269" key="3">
    <source>
    </source>
</evidence>
<evidence type="ECO:0000269" key="4">
    <source>
    </source>
</evidence>
<evidence type="ECO:0000303" key="5">
    <source ref="4"/>
</evidence>
<evidence type="ECO:0000303" key="6">
    <source ref="6"/>
</evidence>
<evidence type="ECO:0000305" key="7"/>
<evidence type="ECO:0007744" key="8">
    <source>
    </source>
</evidence>
<gene>
    <name type="primary">WDL1</name>
    <name type="ordered locus">At3g04630</name>
    <name type="ORF">F7O18.11</name>
</gene>
<sequence>MGREVVEVLMDRNADVSSARVHVAPKIAAEETDEEFEVKECTEEKSLSENAPNVGSAERVGAQKSPKTRNGNAKVSKQDAPLLAVRKPLQPENKKHIDDEDNCSIASSVATSMRMGKSGLTYGSAPTFRSAQRAEKRKEYYQKLEEKNQALEAERNELEQRQKDEQEAALKQLRKNLKFKAKPVPNFYYEAPPAKPELKKLPLTRPKSPKLILSRRKSFSDAVSSSSREEILKTVSNRNRHSTGTVQNKDDDHRNKNTNAAHDSPRVRSGKGKSGLKPVNESSEEA</sequence>